<dbReference type="EC" id="2.5.1.15"/>
<dbReference type="EMBL" id="BA000018">
    <property type="protein sequence ID" value="BAB41702.1"/>
    <property type="molecule type" value="Genomic_DNA"/>
</dbReference>
<dbReference type="PIR" id="C89818">
    <property type="entry name" value="C89818"/>
</dbReference>
<dbReference type="RefSeq" id="WP_000167944.1">
    <property type="nucleotide sequence ID" value="NC_002745.2"/>
</dbReference>
<dbReference type="SMR" id="P64142"/>
<dbReference type="EnsemblBacteria" id="BAB41702">
    <property type="protein sequence ID" value="BAB41702"/>
    <property type="gene ID" value="BAB41702"/>
</dbReference>
<dbReference type="KEGG" id="sau:SA0472"/>
<dbReference type="HOGENOM" id="CLU_008023_0_2_9"/>
<dbReference type="UniPathway" id="UPA00077">
    <property type="reaction ID" value="UER00156"/>
</dbReference>
<dbReference type="GO" id="GO:0005829">
    <property type="term" value="C:cytosol"/>
    <property type="evidence" value="ECO:0007669"/>
    <property type="project" value="TreeGrafter"/>
</dbReference>
<dbReference type="GO" id="GO:0004156">
    <property type="term" value="F:dihydropteroate synthase activity"/>
    <property type="evidence" value="ECO:0007669"/>
    <property type="project" value="UniProtKB-EC"/>
</dbReference>
<dbReference type="GO" id="GO:0046872">
    <property type="term" value="F:metal ion binding"/>
    <property type="evidence" value="ECO:0007669"/>
    <property type="project" value="UniProtKB-KW"/>
</dbReference>
<dbReference type="GO" id="GO:0046656">
    <property type="term" value="P:folic acid biosynthetic process"/>
    <property type="evidence" value="ECO:0007669"/>
    <property type="project" value="UniProtKB-KW"/>
</dbReference>
<dbReference type="GO" id="GO:0046654">
    <property type="term" value="P:tetrahydrofolate biosynthetic process"/>
    <property type="evidence" value="ECO:0007669"/>
    <property type="project" value="UniProtKB-UniPathway"/>
</dbReference>
<dbReference type="CDD" id="cd00739">
    <property type="entry name" value="DHPS"/>
    <property type="match status" value="1"/>
</dbReference>
<dbReference type="FunFam" id="3.20.20.20:FF:000010">
    <property type="entry name" value="Dihydropteroate synthase"/>
    <property type="match status" value="1"/>
</dbReference>
<dbReference type="Gene3D" id="3.20.20.20">
    <property type="entry name" value="Dihydropteroate synthase-like"/>
    <property type="match status" value="1"/>
</dbReference>
<dbReference type="InterPro" id="IPR045031">
    <property type="entry name" value="DHP_synth-like"/>
</dbReference>
<dbReference type="InterPro" id="IPR006390">
    <property type="entry name" value="DHP_synth_dom"/>
</dbReference>
<dbReference type="InterPro" id="IPR011005">
    <property type="entry name" value="Dihydropteroate_synth-like_sf"/>
</dbReference>
<dbReference type="InterPro" id="IPR000489">
    <property type="entry name" value="Pterin-binding_dom"/>
</dbReference>
<dbReference type="NCBIfam" id="TIGR01496">
    <property type="entry name" value="DHPS"/>
    <property type="match status" value="1"/>
</dbReference>
<dbReference type="PANTHER" id="PTHR20941">
    <property type="entry name" value="FOLATE SYNTHESIS PROTEINS"/>
    <property type="match status" value="1"/>
</dbReference>
<dbReference type="PANTHER" id="PTHR20941:SF1">
    <property type="entry name" value="FOLIC ACID SYNTHESIS PROTEIN FOL1"/>
    <property type="match status" value="1"/>
</dbReference>
<dbReference type="Pfam" id="PF00809">
    <property type="entry name" value="Pterin_bind"/>
    <property type="match status" value="1"/>
</dbReference>
<dbReference type="SUPFAM" id="SSF51717">
    <property type="entry name" value="Dihydropteroate synthetase-like"/>
    <property type="match status" value="1"/>
</dbReference>
<dbReference type="PROSITE" id="PS00792">
    <property type="entry name" value="DHPS_1"/>
    <property type="match status" value="1"/>
</dbReference>
<dbReference type="PROSITE" id="PS00793">
    <property type="entry name" value="DHPS_2"/>
    <property type="match status" value="1"/>
</dbReference>
<dbReference type="PROSITE" id="PS50972">
    <property type="entry name" value="PTERIN_BINDING"/>
    <property type="match status" value="1"/>
</dbReference>
<organism>
    <name type="scientific">Staphylococcus aureus (strain N315)</name>
    <dbReference type="NCBI Taxonomy" id="158879"/>
    <lineage>
        <taxon>Bacteria</taxon>
        <taxon>Bacillati</taxon>
        <taxon>Bacillota</taxon>
        <taxon>Bacilli</taxon>
        <taxon>Bacillales</taxon>
        <taxon>Staphylococcaceae</taxon>
        <taxon>Staphylococcus</taxon>
    </lineage>
</organism>
<name>DHPS_STAAN</name>
<reference key="1">
    <citation type="journal article" date="2001" name="Lancet">
        <title>Whole genome sequencing of meticillin-resistant Staphylococcus aureus.</title>
        <authorList>
            <person name="Kuroda M."/>
            <person name="Ohta T."/>
            <person name="Uchiyama I."/>
            <person name="Baba T."/>
            <person name="Yuzawa H."/>
            <person name="Kobayashi I."/>
            <person name="Cui L."/>
            <person name="Oguchi A."/>
            <person name="Aoki K."/>
            <person name="Nagai Y."/>
            <person name="Lian J.-Q."/>
            <person name="Ito T."/>
            <person name="Kanamori M."/>
            <person name="Matsumaru H."/>
            <person name="Maruyama A."/>
            <person name="Murakami H."/>
            <person name="Hosoyama A."/>
            <person name="Mizutani-Ui Y."/>
            <person name="Takahashi N.K."/>
            <person name="Sawano T."/>
            <person name="Inoue R."/>
            <person name="Kaito C."/>
            <person name="Sekimizu K."/>
            <person name="Hirakawa H."/>
            <person name="Kuhara S."/>
            <person name="Goto S."/>
            <person name="Yabuzaki J."/>
            <person name="Kanehisa M."/>
            <person name="Yamashita A."/>
            <person name="Oshima K."/>
            <person name="Furuya K."/>
            <person name="Yoshino C."/>
            <person name="Shiba T."/>
            <person name="Hattori M."/>
            <person name="Ogasawara N."/>
            <person name="Hayashi H."/>
            <person name="Hiramatsu K."/>
        </authorList>
    </citation>
    <scope>NUCLEOTIDE SEQUENCE [LARGE SCALE GENOMIC DNA]</scope>
    <source>
        <strain>N315</strain>
    </source>
</reference>
<accession>P64142</accession>
<accession>Q99W89</accession>
<sequence length="267" mass="29533">MTKTKIMGILNVTPDSFSDGGKFNNVETAINRVKAMIDEGADIIDVGGVSTRPGHEMVTLEEELNRVLPVVEAIVGFDVKISVDTFRSEVAEACLKLGVDMINDQWAGLYDHRMFQIVAKYDAEIILMHNGNGNRDEPVVEEMLTSLLAQAHQAKIAGIPSNKIWLDPGIGFAKTRNEEAEVMARLDELVATEYPVLLATSRKRFTKEMMGYDTTPVERDEVTAATTAYGIMKGVRAVRVHNVELNAKLAKGIDFLKENENARHNLS</sequence>
<comment type="function">
    <text evidence="2">Catalyzes the condensation of para-aminobenzoate (pABA) with 6-hydroxymethyl-7,8-dihydropterin diphosphate (DHPt-PP) to form 7,8-dihydropteroate (H2Pte), the immediate precursor of folate derivatives.</text>
</comment>
<comment type="catalytic activity">
    <reaction evidence="2">
        <text>(7,8-dihydropterin-6-yl)methyl diphosphate + 4-aminobenzoate = 7,8-dihydropteroate + diphosphate</text>
        <dbReference type="Rhea" id="RHEA:19949"/>
        <dbReference type="ChEBI" id="CHEBI:17836"/>
        <dbReference type="ChEBI" id="CHEBI:17839"/>
        <dbReference type="ChEBI" id="CHEBI:33019"/>
        <dbReference type="ChEBI" id="CHEBI:72950"/>
        <dbReference type="EC" id="2.5.1.15"/>
    </reaction>
</comment>
<comment type="cofactor">
    <cofactor evidence="2">
        <name>Mg(2+)</name>
        <dbReference type="ChEBI" id="CHEBI:18420"/>
    </cofactor>
</comment>
<comment type="pathway">
    <text>Cofactor biosynthesis; tetrahydrofolate biosynthesis; 7,8-dihydrofolate from 2-amino-4-hydroxy-6-hydroxymethyl-7,8-dihydropteridine diphosphate and 4-aminobenzoate: step 1/2.</text>
</comment>
<comment type="subunit">
    <text evidence="1">Homodimer.</text>
</comment>
<comment type="similarity">
    <text evidence="5">Belongs to the DHPS family.</text>
</comment>
<keyword id="KW-0289">Folate biosynthesis</keyword>
<keyword id="KW-0460">Magnesium</keyword>
<keyword id="KW-0479">Metal-binding</keyword>
<keyword id="KW-0808">Transferase</keyword>
<evidence type="ECO:0000250" key="1"/>
<evidence type="ECO:0000250" key="2">
    <source>
        <dbReference type="UniProtKB" id="P0AC13"/>
    </source>
</evidence>
<evidence type="ECO:0000250" key="3">
    <source>
        <dbReference type="UniProtKB" id="P9WND1"/>
    </source>
</evidence>
<evidence type="ECO:0000255" key="4">
    <source>
        <dbReference type="PROSITE-ProRule" id="PRU00334"/>
    </source>
</evidence>
<evidence type="ECO:0000305" key="5"/>
<gene>
    <name type="primary">folP</name>
    <name type="ordered locus">SA0472</name>
</gene>
<proteinExistence type="inferred from homology"/>
<feature type="chain" id="PRO_0000168222" description="Dihydropteroate synthase">
    <location>
        <begin position="1"/>
        <end position="267"/>
    </location>
</feature>
<feature type="domain" description="Pterin-binding" evidence="4">
    <location>
        <begin position="1"/>
        <end position="251"/>
    </location>
</feature>
<feature type="binding site" evidence="3">
    <location>
        <position position="11"/>
    </location>
    <ligand>
        <name>Mg(2+)</name>
        <dbReference type="ChEBI" id="CHEBI:18420"/>
    </ligand>
</feature>
<feature type="binding site" evidence="2">
    <location>
        <position position="51"/>
    </location>
    <ligand>
        <name>(7,8-dihydropterin-6-yl)methyl diphosphate</name>
        <dbReference type="ChEBI" id="CHEBI:72950"/>
    </ligand>
</feature>
<feature type="binding site" evidence="2">
    <location>
        <position position="84"/>
    </location>
    <ligand>
        <name>(7,8-dihydropterin-6-yl)methyl diphosphate</name>
        <dbReference type="ChEBI" id="CHEBI:72950"/>
    </ligand>
</feature>
<feature type="binding site" evidence="2">
    <location>
        <position position="103"/>
    </location>
    <ligand>
        <name>(7,8-dihydropterin-6-yl)methyl diphosphate</name>
        <dbReference type="ChEBI" id="CHEBI:72950"/>
    </ligand>
</feature>
<feature type="binding site" evidence="2">
    <location>
        <position position="167"/>
    </location>
    <ligand>
        <name>(7,8-dihydropterin-6-yl)methyl diphosphate</name>
        <dbReference type="ChEBI" id="CHEBI:72950"/>
    </ligand>
</feature>
<feature type="binding site" evidence="2">
    <location>
        <position position="203"/>
    </location>
    <ligand>
        <name>(7,8-dihydropterin-6-yl)methyl diphosphate</name>
        <dbReference type="ChEBI" id="CHEBI:72950"/>
    </ligand>
</feature>
<feature type="binding site" evidence="2">
    <location>
        <begin position="239"/>
        <end position="241"/>
    </location>
    <ligand>
        <name>(7,8-dihydropterin-6-yl)methyl diphosphate</name>
        <dbReference type="ChEBI" id="CHEBI:72950"/>
    </ligand>
</feature>
<protein>
    <recommendedName>
        <fullName>Dihydropteroate synthase</fullName>
        <shortName>DHPS</shortName>
        <ecNumber>2.5.1.15</ecNumber>
    </recommendedName>
    <alternativeName>
        <fullName>Dihydropteroate pyrophosphorylase</fullName>
    </alternativeName>
</protein>